<sequence>MDALSLVNSTVAKFNEVTQLQASPAILSTALTAIAGIIVLLVITSKRRSSLKLPPGKLGLPFIGETLEFVKALRSDTLRQFVEEREGKFGRVFKTSLLGKPTVILCGPAGNRLVLSNEEKLLHVSWSAQIARILGLNSVAVKRGDDHRVLRVALAGFLGSAGLQLYIGKMSALIRNHINEKWKGKDEVNVLSLVRDLVMDNSAILFFNIYDKERKQQLHEILKIILASHFGIPLNIPGFLYRKALKGSLKRKKILSALLEKRKDELRSRLASSNQDLLSVLLSFRDERGKPLSDEAVLDNCFAMLDASYDTTTSQMTLILKMLSSNPECFEKVVQEQLEIASNKKEGEEITMKDIKAMKYTWQVLQESLRMLSPVFGTLRKTMNDINHDGYTIPKGWQVVWTTYSTHQKDIYFKQPDKFMPSRFEEEDGHLDAYTFVPFGGGRRTCPGWEYAKVEILLFLHHFVKAFSGYTPTDPHERICGYPVPLVPVKGFPIKLIARS</sequence>
<feature type="chain" id="PRO_0000418752" description="Taxoid 7-beta-hydroxylase">
    <location>
        <begin position="1"/>
        <end position="500"/>
    </location>
</feature>
<feature type="transmembrane region" description="Helical" evidence="2">
    <location>
        <begin position="24"/>
        <end position="44"/>
    </location>
</feature>
<feature type="binding site" description="axial binding residue" evidence="1">
    <location>
        <position position="446"/>
    </location>
    <ligand>
        <name>heme</name>
        <dbReference type="ChEBI" id="CHEBI:30413"/>
    </ligand>
    <ligandPart>
        <name>Fe</name>
        <dbReference type="ChEBI" id="CHEBI:18248"/>
    </ligandPart>
</feature>
<name>T7BH_TAXCU</name>
<protein>
    <recommendedName>
        <fullName evidence="4">Taxoid 7-beta-hydroxylase</fullName>
        <ecNumber evidence="3">1.14.14.182</ecNumber>
    </recommendedName>
</protein>
<organism>
    <name type="scientific">Taxus cuspidata</name>
    <name type="common">Japanese yew</name>
    <dbReference type="NCBI Taxonomy" id="99806"/>
    <lineage>
        <taxon>Eukaryota</taxon>
        <taxon>Viridiplantae</taxon>
        <taxon>Streptophyta</taxon>
        <taxon>Embryophyta</taxon>
        <taxon>Tracheophyta</taxon>
        <taxon>Spermatophyta</taxon>
        <taxon>Pinopsida</taxon>
        <taxon>Pinidae</taxon>
        <taxon>Conifers II</taxon>
        <taxon>Cupressales</taxon>
        <taxon>Taxaceae</taxon>
        <taxon>Taxus</taxon>
    </lineage>
</organism>
<proteinExistence type="evidence at protein level"/>
<accession>Q6JTJ0</accession>
<comment type="function">
    <text evidence="3">Catalyzes the conversion of taxusin to 7-beta-hydroxytaxusin in taxol biosynthesis (PubMed:15157877). Catalyzes the conversion of 2-alpha-hydroxytaxusin to 2-alpha-7-beta-hydroxytaxusin in taxol biosynthesis (PubMed:15157877).</text>
</comment>
<comment type="catalytic activity">
    <reaction evidence="3">
        <text>taxusin + reduced [NADPH--hemoprotein reductase] + O2 = 7beta-hydroxytaxusin + oxidized [NADPH--hemoprotein reductase] + H2O + H(+)</text>
        <dbReference type="Rhea" id="RHEA:31975"/>
        <dbReference type="Rhea" id="RHEA-COMP:11964"/>
        <dbReference type="Rhea" id="RHEA-COMP:11965"/>
        <dbReference type="ChEBI" id="CHEBI:15377"/>
        <dbReference type="ChEBI" id="CHEBI:15378"/>
        <dbReference type="ChEBI" id="CHEBI:15379"/>
        <dbReference type="ChEBI" id="CHEBI:57618"/>
        <dbReference type="ChEBI" id="CHEBI:58210"/>
        <dbReference type="ChEBI" id="CHEBI:63664"/>
        <dbReference type="ChEBI" id="CHEBI:63665"/>
        <dbReference type="EC" id="1.14.14.182"/>
    </reaction>
    <physiologicalReaction direction="left-to-right" evidence="3">
        <dbReference type="Rhea" id="RHEA:31976"/>
    </physiologicalReaction>
</comment>
<comment type="catalytic activity">
    <reaction evidence="3">
        <text>2alpha-hydroxytaxusin + reduced [NADPH--hemoprotein reductase] + O2 = 2alpha,7beta-dihydroxytaxusin + oxidized [NADPH--hemoprotein reductase] + H2O + H(+)</text>
        <dbReference type="Rhea" id="RHEA:71403"/>
        <dbReference type="Rhea" id="RHEA-COMP:11964"/>
        <dbReference type="Rhea" id="RHEA-COMP:11965"/>
        <dbReference type="ChEBI" id="CHEBI:15377"/>
        <dbReference type="ChEBI" id="CHEBI:15378"/>
        <dbReference type="ChEBI" id="CHEBI:15379"/>
        <dbReference type="ChEBI" id="CHEBI:57618"/>
        <dbReference type="ChEBI" id="CHEBI:58210"/>
        <dbReference type="ChEBI" id="CHEBI:190505"/>
        <dbReference type="ChEBI" id="CHEBI:190506"/>
        <dbReference type="EC" id="1.14.14.182"/>
    </reaction>
    <physiologicalReaction direction="left-to-right" evidence="3">
        <dbReference type="Rhea" id="RHEA:71404"/>
    </physiologicalReaction>
</comment>
<comment type="catalytic activity">
    <reaction evidence="3">
        <text>7beta-hydroxytaxusin + reduced [NADPH--hemoprotein reductase] + O2 = 2alpha,7beta-dihydroxytaxusin + oxidized [NADPH--hemoprotein reductase] + H2O + H(+)</text>
        <dbReference type="Rhea" id="RHEA:71407"/>
        <dbReference type="Rhea" id="RHEA-COMP:11964"/>
        <dbReference type="Rhea" id="RHEA-COMP:11965"/>
        <dbReference type="ChEBI" id="CHEBI:15377"/>
        <dbReference type="ChEBI" id="CHEBI:15378"/>
        <dbReference type="ChEBI" id="CHEBI:15379"/>
        <dbReference type="ChEBI" id="CHEBI:57618"/>
        <dbReference type="ChEBI" id="CHEBI:58210"/>
        <dbReference type="ChEBI" id="CHEBI:63665"/>
        <dbReference type="ChEBI" id="CHEBI:190506"/>
    </reaction>
    <physiologicalReaction direction="left-to-right" evidence="3">
        <dbReference type="Rhea" id="RHEA:71408"/>
    </physiologicalReaction>
</comment>
<comment type="biophysicochemical properties">
    <kinetics>
        <KM evidence="3">7.6 uM for taxusin</KM>
    </kinetics>
    <phDependence>
        <text evidence="3">Optimum pH is 7.5.</text>
    </phDependence>
</comment>
<comment type="pathway">
    <text evidence="5">Alkaloid biosynthesis; taxol biosynthesis.</text>
</comment>
<comment type="subcellular location">
    <subcellularLocation>
        <location evidence="3">Microsome membrane</location>
        <topology evidence="2">Single-pass membrane protein</topology>
    </subcellularLocation>
</comment>
<comment type="similarity">
    <text evidence="5">Belongs to the cytochrome P450 family.</text>
</comment>
<keyword id="KW-0256">Endoplasmic reticulum</keyword>
<keyword id="KW-0349">Heme</keyword>
<keyword id="KW-0408">Iron</keyword>
<keyword id="KW-0472">Membrane</keyword>
<keyword id="KW-0479">Metal-binding</keyword>
<keyword id="KW-0492">Microsome</keyword>
<keyword id="KW-0503">Monooxygenase</keyword>
<keyword id="KW-0560">Oxidoreductase</keyword>
<keyword id="KW-0876">Taxol biosynthesis</keyword>
<keyword id="KW-0812">Transmembrane</keyword>
<keyword id="KW-1133">Transmembrane helix</keyword>
<evidence type="ECO:0000250" key="1">
    <source>
        <dbReference type="UniProtKB" id="Q96242"/>
    </source>
</evidence>
<evidence type="ECO:0000255" key="2"/>
<evidence type="ECO:0000269" key="3">
    <source>
    </source>
</evidence>
<evidence type="ECO:0000303" key="4">
    <source>
    </source>
</evidence>
<evidence type="ECO:0000305" key="5"/>
<reference key="1">
    <citation type="journal article" date="2004" name="Chem. Biol.">
        <title>Taxol biosynthesis: Molecular cloning and characterization of a cytochrome P450 taxoid 7 beta-hydroxylase.</title>
        <authorList>
            <person name="Chau M."/>
            <person name="Jennewein S."/>
            <person name="Walker K."/>
            <person name="Croteau R."/>
        </authorList>
    </citation>
    <scope>NUCLEOTIDE SEQUENCE [MRNA]</scope>
    <scope>FUNCTION</scope>
    <scope>CATALYTIC ACTIVITY</scope>
    <scope>BIOPHYSICOCHEMICAL PROPERTIES</scope>
    <scope>SUBCELLULAR LOCATION</scope>
</reference>
<dbReference type="EC" id="1.14.14.182" evidence="3"/>
<dbReference type="EMBL" id="AY307951">
    <property type="protein sequence ID" value="AAQ75553.1"/>
    <property type="molecule type" value="mRNA"/>
</dbReference>
<dbReference type="SMR" id="Q6JTJ0"/>
<dbReference type="KEGG" id="ag:AAQ75553"/>
<dbReference type="BioCyc" id="MetaCyc:MONOMER-17468"/>
<dbReference type="BRENDA" id="1.14.13.147">
    <property type="organism ID" value="6225"/>
</dbReference>
<dbReference type="UniPathway" id="UPA00842"/>
<dbReference type="GO" id="GO:0005783">
    <property type="term" value="C:endoplasmic reticulum"/>
    <property type="evidence" value="ECO:0007669"/>
    <property type="project" value="UniProtKB-KW"/>
</dbReference>
<dbReference type="GO" id="GO:0043231">
    <property type="term" value="C:intracellular membrane-bounded organelle"/>
    <property type="evidence" value="ECO:0000314"/>
    <property type="project" value="UniProtKB"/>
</dbReference>
<dbReference type="GO" id="GO:0016020">
    <property type="term" value="C:membrane"/>
    <property type="evidence" value="ECO:0007669"/>
    <property type="project" value="UniProtKB-KW"/>
</dbReference>
<dbReference type="GO" id="GO:0020037">
    <property type="term" value="F:heme binding"/>
    <property type="evidence" value="ECO:0007669"/>
    <property type="project" value="InterPro"/>
</dbReference>
<dbReference type="GO" id="GO:0005506">
    <property type="term" value="F:iron ion binding"/>
    <property type="evidence" value="ECO:0007669"/>
    <property type="project" value="InterPro"/>
</dbReference>
<dbReference type="GO" id="GO:0102365">
    <property type="term" value="F:taxoid 2alpha-hydroxylase activity"/>
    <property type="evidence" value="ECO:0007669"/>
    <property type="project" value="RHEA"/>
</dbReference>
<dbReference type="GO" id="GO:0036239">
    <property type="term" value="F:taxoid 7beta-hydroxylase activity"/>
    <property type="evidence" value="ECO:0000314"/>
    <property type="project" value="UniProtKB"/>
</dbReference>
<dbReference type="GO" id="GO:0042617">
    <property type="term" value="P:paclitaxel biosynthetic process"/>
    <property type="evidence" value="ECO:0000314"/>
    <property type="project" value="UniProtKB"/>
</dbReference>
<dbReference type="GO" id="GO:0016125">
    <property type="term" value="P:sterol metabolic process"/>
    <property type="evidence" value="ECO:0007669"/>
    <property type="project" value="TreeGrafter"/>
</dbReference>
<dbReference type="CDD" id="cd11043">
    <property type="entry name" value="CYP90-like"/>
    <property type="match status" value="1"/>
</dbReference>
<dbReference type="FunFam" id="1.10.630.10:FF:000022">
    <property type="entry name" value="Taxadiene 5-alpha hydroxylase"/>
    <property type="match status" value="1"/>
</dbReference>
<dbReference type="Gene3D" id="1.10.630.10">
    <property type="entry name" value="Cytochrome P450"/>
    <property type="match status" value="1"/>
</dbReference>
<dbReference type="InterPro" id="IPR001128">
    <property type="entry name" value="Cyt_P450"/>
</dbReference>
<dbReference type="InterPro" id="IPR017972">
    <property type="entry name" value="Cyt_P450_CS"/>
</dbReference>
<dbReference type="InterPro" id="IPR002401">
    <property type="entry name" value="Cyt_P450_E_grp-I"/>
</dbReference>
<dbReference type="InterPro" id="IPR036396">
    <property type="entry name" value="Cyt_P450_sf"/>
</dbReference>
<dbReference type="PANTHER" id="PTHR24286">
    <property type="entry name" value="CYTOCHROME P450 26"/>
    <property type="match status" value="1"/>
</dbReference>
<dbReference type="PANTHER" id="PTHR24286:SF384">
    <property type="entry name" value="P450, PUTATIVE (EUROFUNG)-RELATED"/>
    <property type="match status" value="1"/>
</dbReference>
<dbReference type="Pfam" id="PF00067">
    <property type="entry name" value="p450"/>
    <property type="match status" value="1"/>
</dbReference>
<dbReference type="PRINTS" id="PR00463">
    <property type="entry name" value="EP450I"/>
</dbReference>
<dbReference type="PRINTS" id="PR00385">
    <property type="entry name" value="P450"/>
</dbReference>
<dbReference type="SUPFAM" id="SSF48264">
    <property type="entry name" value="Cytochrome P450"/>
    <property type="match status" value="1"/>
</dbReference>
<dbReference type="PROSITE" id="PS00086">
    <property type="entry name" value="CYTOCHROME_P450"/>
    <property type="match status" value="1"/>
</dbReference>